<feature type="chain" id="PRO_0000288783" description="Serine/threonine-protein phosphatase PGAM5, mitochondrial">
    <location>
        <begin position="1"/>
        <end position="288"/>
    </location>
</feature>
<feature type="topological domain" description="Mitochondrial matrix" evidence="2">
    <location>
        <begin position="1"/>
        <end position="6"/>
    </location>
</feature>
<feature type="transmembrane region" description="Helical" evidence="3">
    <location>
        <begin position="7"/>
        <end position="29"/>
    </location>
</feature>
<feature type="topological domain" description="Mitochondrial intermembrane" evidence="2">
    <location>
        <begin position="30"/>
        <end position="288"/>
    </location>
</feature>
<feature type="region of interest" description="Interaction with KEAP1" evidence="1">
    <location>
        <begin position="76"/>
        <end position="81"/>
    </location>
</feature>
<feature type="site" description="Cleavage; by PARL" evidence="2">
    <location>
        <begin position="24"/>
        <end position="25"/>
    </location>
</feature>
<feature type="modified residue" description="Phosphoserine" evidence="2">
    <location>
        <position position="79"/>
    </location>
</feature>
<feature type="modified residue" description="Phosphoserine" evidence="2">
    <location>
        <position position="86"/>
    </location>
</feature>
<feature type="modified residue" description="N6-acetyllysine" evidence="2">
    <location>
        <position position="115"/>
    </location>
</feature>
<feature type="modified residue" description="N6-acetyllysine" evidence="2">
    <location>
        <position position="143"/>
    </location>
</feature>
<feature type="modified residue" description="N6-acetyllysine" evidence="2">
    <location>
        <position position="190"/>
    </location>
</feature>
<feature type="splice variant" id="VSP_025762" description="In isoform 2." evidence="6 7">
    <location>
        <position position="195"/>
    </location>
</feature>
<feature type="sequence conflict" description="In Ref. 1; BAE26984." evidence="8" ref="1">
    <original>A</original>
    <variation>V</variation>
    <location>
        <position position="46"/>
    </location>
</feature>
<feature type="sequence conflict" description="In Ref. 1; BAC28763." evidence="8" ref="1">
    <original>I</original>
    <variation>M</variation>
    <location>
        <position position="102"/>
    </location>
</feature>
<feature type="sequence conflict" description="In Ref. 1; BAB28067." evidence="8" ref="1">
    <original>I</original>
    <variation>V</variation>
    <location>
        <position position="144"/>
    </location>
</feature>
<dbReference type="EC" id="3.1.3.16"/>
<dbReference type="EMBL" id="AK012159">
    <property type="protein sequence ID" value="BAB28067.1"/>
    <property type="status" value="ALT_FRAME"/>
    <property type="molecule type" value="mRNA"/>
</dbReference>
<dbReference type="EMBL" id="AK034588">
    <property type="protein sequence ID" value="BAC28763.1"/>
    <property type="molecule type" value="mRNA"/>
</dbReference>
<dbReference type="EMBL" id="AK049246">
    <property type="protein sequence ID" value="BAC33634.1"/>
    <property type="molecule type" value="mRNA"/>
</dbReference>
<dbReference type="EMBL" id="AK146216">
    <property type="protein sequence ID" value="BAE26984.1"/>
    <property type="molecule type" value="mRNA"/>
</dbReference>
<dbReference type="EMBL" id="AK169643">
    <property type="protein sequence ID" value="BAE41272.1"/>
    <property type="molecule type" value="mRNA"/>
</dbReference>
<dbReference type="EMBL" id="BC052179">
    <property type="protein sequence ID" value="AAH52179.1"/>
    <property type="molecule type" value="mRNA"/>
</dbReference>
<dbReference type="EMBL" id="BC138924">
    <property type="protein sequence ID" value="AAI38925.1"/>
    <property type="molecule type" value="mRNA"/>
</dbReference>
<dbReference type="EMBL" id="BC138925">
    <property type="protein sequence ID" value="AAI38926.1"/>
    <property type="molecule type" value="mRNA"/>
</dbReference>
<dbReference type="CCDS" id="CCDS19523.1">
    <molecule id="Q8BX10-2"/>
</dbReference>
<dbReference type="CCDS" id="CCDS51606.1">
    <molecule id="Q8BX10-1"/>
</dbReference>
<dbReference type="RefSeq" id="NP_001157010.1">
    <molecule id="Q8BX10-1"/>
    <property type="nucleotide sequence ID" value="NM_001163538.1"/>
</dbReference>
<dbReference type="RefSeq" id="NP_082549.2">
    <molecule id="Q8BX10-2"/>
    <property type="nucleotide sequence ID" value="NM_028273.3"/>
</dbReference>
<dbReference type="SMR" id="Q8BX10"/>
<dbReference type="BioGRID" id="215426">
    <property type="interactions" value="21"/>
</dbReference>
<dbReference type="DIP" id="DIP-32064N"/>
<dbReference type="FunCoup" id="Q8BX10">
    <property type="interactions" value="2511"/>
</dbReference>
<dbReference type="IntAct" id="Q8BX10">
    <property type="interactions" value="5"/>
</dbReference>
<dbReference type="MINT" id="Q8BX10"/>
<dbReference type="STRING" id="10090.ENSMUSP00000108124"/>
<dbReference type="ChEMBL" id="CHEMBL2331071"/>
<dbReference type="iPTMnet" id="Q8BX10"/>
<dbReference type="PhosphoSitePlus" id="Q8BX10"/>
<dbReference type="SwissPalm" id="Q8BX10"/>
<dbReference type="jPOST" id="Q8BX10"/>
<dbReference type="PaxDb" id="10090-ENSMUSP00000108124"/>
<dbReference type="PeptideAtlas" id="Q8BX10"/>
<dbReference type="ProteomicsDB" id="288046">
    <molecule id="Q8BX10-1"/>
</dbReference>
<dbReference type="ProteomicsDB" id="288047">
    <molecule id="Q8BX10-2"/>
</dbReference>
<dbReference type="Pumba" id="Q8BX10"/>
<dbReference type="Antibodypedia" id="49123">
    <property type="antibodies" value="56 antibodies from 17 providers"/>
</dbReference>
<dbReference type="DNASU" id="72542"/>
<dbReference type="Ensembl" id="ENSMUST00000059229.16">
    <molecule id="Q8BX10-2"/>
    <property type="protein sequence ID" value="ENSMUSP00000057760.9"/>
    <property type="gene ID" value="ENSMUSG00000029500.17"/>
</dbReference>
<dbReference type="Ensembl" id="ENSMUST00000112505.9">
    <molecule id="Q8BX10-1"/>
    <property type="protein sequence ID" value="ENSMUSP00000108124.3"/>
    <property type="gene ID" value="ENSMUSG00000029500.17"/>
</dbReference>
<dbReference type="GeneID" id="72542"/>
<dbReference type="KEGG" id="mmu:72542"/>
<dbReference type="UCSC" id="uc008yqh.2">
    <molecule id="Q8BX10-2"/>
    <property type="organism name" value="mouse"/>
</dbReference>
<dbReference type="UCSC" id="uc008yqi.2">
    <molecule id="Q8BX10-1"/>
    <property type="organism name" value="mouse"/>
</dbReference>
<dbReference type="AGR" id="MGI:1919792"/>
<dbReference type="CTD" id="192111"/>
<dbReference type="MGI" id="MGI:1919792">
    <property type="gene designation" value="Pgam5"/>
</dbReference>
<dbReference type="VEuPathDB" id="HostDB:ENSMUSG00000029500"/>
<dbReference type="eggNOG" id="KOG4609">
    <property type="taxonomic scope" value="Eukaryota"/>
</dbReference>
<dbReference type="GeneTree" id="ENSGT00390000004796"/>
<dbReference type="HOGENOM" id="CLU_063130_0_1_1"/>
<dbReference type="InParanoid" id="Q8BX10"/>
<dbReference type="OMA" id="QLPLFAW"/>
<dbReference type="OrthoDB" id="2118094at2759"/>
<dbReference type="PhylomeDB" id="Q8BX10"/>
<dbReference type="TreeFam" id="TF314977"/>
<dbReference type="BRENDA" id="3.9.1.3">
    <property type="organism ID" value="3474"/>
</dbReference>
<dbReference type="Reactome" id="R-MMU-8934903">
    <property type="pathway name" value="Receptor Mediated Mitophagy"/>
</dbReference>
<dbReference type="Reactome" id="R-MMU-9861718">
    <property type="pathway name" value="Regulation of pyruvate metabolism"/>
</dbReference>
<dbReference type="BioGRID-ORCS" id="72542">
    <property type="hits" value="3 hits in 80 CRISPR screens"/>
</dbReference>
<dbReference type="CD-CODE" id="CE726F99">
    <property type="entry name" value="Postsynaptic density"/>
</dbReference>
<dbReference type="ChiTaRS" id="Pgam5">
    <property type="organism name" value="mouse"/>
</dbReference>
<dbReference type="PRO" id="PR:Q8BX10"/>
<dbReference type="Proteomes" id="UP000000589">
    <property type="component" value="Chromosome 5"/>
</dbReference>
<dbReference type="RNAct" id="Q8BX10">
    <property type="molecule type" value="protein"/>
</dbReference>
<dbReference type="Bgee" id="ENSMUSG00000029500">
    <property type="expression patterns" value="Expressed in dorsal pancreas and 256 other cell types or tissues"/>
</dbReference>
<dbReference type="ExpressionAtlas" id="Q8BX10">
    <property type="expression patterns" value="baseline and differential"/>
</dbReference>
<dbReference type="GO" id="GO:0005743">
    <property type="term" value="C:mitochondrial inner membrane"/>
    <property type="evidence" value="ECO:0007669"/>
    <property type="project" value="UniProtKB-SubCell"/>
</dbReference>
<dbReference type="GO" id="GO:0005741">
    <property type="term" value="C:mitochondrial outer membrane"/>
    <property type="evidence" value="ECO:0007669"/>
    <property type="project" value="UniProtKB-SubCell"/>
</dbReference>
<dbReference type="GO" id="GO:0004722">
    <property type="term" value="F:protein serine/threonine phosphatase activity"/>
    <property type="evidence" value="ECO:0007669"/>
    <property type="project" value="UniProtKB-EC"/>
</dbReference>
<dbReference type="GO" id="GO:0070266">
    <property type="term" value="P:necroptotic process"/>
    <property type="evidence" value="ECO:0000315"/>
    <property type="project" value="UniProtKB"/>
</dbReference>
<dbReference type="GO" id="GO:0120163">
    <property type="term" value="P:negative regulation of cold-induced thermogenesis"/>
    <property type="evidence" value="ECO:0000315"/>
    <property type="project" value="YuBioLab"/>
</dbReference>
<dbReference type="CDD" id="cd07067">
    <property type="entry name" value="HP_PGM_like"/>
    <property type="match status" value="1"/>
</dbReference>
<dbReference type="FunFam" id="3.40.50.1240:FF:000009">
    <property type="entry name" value="serine/threonine-protein phosphatase PGAM5, mitochondrial isoform X1"/>
    <property type="match status" value="1"/>
</dbReference>
<dbReference type="Gene3D" id="3.40.50.1240">
    <property type="entry name" value="Phosphoglycerate mutase-like"/>
    <property type="match status" value="1"/>
</dbReference>
<dbReference type="InterPro" id="IPR013078">
    <property type="entry name" value="His_Pase_superF_clade-1"/>
</dbReference>
<dbReference type="InterPro" id="IPR029033">
    <property type="entry name" value="His_PPase_superfam"/>
</dbReference>
<dbReference type="InterPro" id="IPR051021">
    <property type="entry name" value="Mito_Ser/Thr_phosphatase"/>
</dbReference>
<dbReference type="PANTHER" id="PTHR20935">
    <property type="entry name" value="PHOSPHOGLYCERATE MUTASE-RELATED"/>
    <property type="match status" value="1"/>
</dbReference>
<dbReference type="PANTHER" id="PTHR20935:SF0">
    <property type="entry name" value="SERINE_THREONINE-PROTEIN PHOSPHATASE PGAM5, MITOCHONDRIAL"/>
    <property type="match status" value="1"/>
</dbReference>
<dbReference type="Pfam" id="PF00300">
    <property type="entry name" value="His_Phos_1"/>
    <property type="match status" value="1"/>
</dbReference>
<dbReference type="SMART" id="SM00855">
    <property type="entry name" value="PGAM"/>
    <property type="match status" value="1"/>
</dbReference>
<dbReference type="SUPFAM" id="SSF53254">
    <property type="entry name" value="Phosphoglycerate mutase-like"/>
    <property type="match status" value="1"/>
</dbReference>
<organism>
    <name type="scientific">Mus musculus</name>
    <name type="common">Mouse</name>
    <dbReference type="NCBI Taxonomy" id="10090"/>
    <lineage>
        <taxon>Eukaryota</taxon>
        <taxon>Metazoa</taxon>
        <taxon>Chordata</taxon>
        <taxon>Craniata</taxon>
        <taxon>Vertebrata</taxon>
        <taxon>Euteleostomi</taxon>
        <taxon>Mammalia</taxon>
        <taxon>Eutheria</taxon>
        <taxon>Euarchontoglires</taxon>
        <taxon>Glires</taxon>
        <taxon>Rodentia</taxon>
        <taxon>Myomorpha</taxon>
        <taxon>Muroidea</taxon>
        <taxon>Muridae</taxon>
        <taxon>Murinae</taxon>
        <taxon>Mus</taxon>
        <taxon>Mus</taxon>
    </lineage>
</organism>
<name>PGAM5_MOUSE</name>
<reference key="1">
    <citation type="journal article" date="2005" name="Science">
        <title>The transcriptional landscape of the mammalian genome.</title>
        <authorList>
            <person name="Carninci P."/>
            <person name="Kasukawa T."/>
            <person name="Katayama S."/>
            <person name="Gough J."/>
            <person name="Frith M.C."/>
            <person name="Maeda N."/>
            <person name="Oyama R."/>
            <person name="Ravasi T."/>
            <person name="Lenhard B."/>
            <person name="Wells C."/>
            <person name="Kodzius R."/>
            <person name="Shimokawa K."/>
            <person name="Bajic V.B."/>
            <person name="Brenner S.E."/>
            <person name="Batalov S."/>
            <person name="Forrest A.R."/>
            <person name="Zavolan M."/>
            <person name="Davis M.J."/>
            <person name="Wilming L.G."/>
            <person name="Aidinis V."/>
            <person name="Allen J.E."/>
            <person name="Ambesi-Impiombato A."/>
            <person name="Apweiler R."/>
            <person name="Aturaliya R.N."/>
            <person name="Bailey T.L."/>
            <person name="Bansal M."/>
            <person name="Baxter L."/>
            <person name="Beisel K.W."/>
            <person name="Bersano T."/>
            <person name="Bono H."/>
            <person name="Chalk A.M."/>
            <person name="Chiu K.P."/>
            <person name="Choudhary V."/>
            <person name="Christoffels A."/>
            <person name="Clutterbuck D.R."/>
            <person name="Crowe M.L."/>
            <person name="Dalla E."/>
            <person name="Dalrymple B.P."/>
            <person name="de Bono B."/>
            <person name="Della Gatta G."/>
            <person name="di Bernardo D."/>
            <person name="Down T."/>
            <person name="Engstrom P."/>
            <person name="Fagiolini M."/>
            <person name="Faulkner G."/>
            <person name="Fletcher C.F."/>
            <person name="Fukushima T."/>
            <person name="Furuno M."/>
            <person name="Futaki S."/>
            <person name="Gariboldi M."/>
            <person name="Georgii-Hemming P."/>
            <person name="Gingeras T.R."/>
            <person name="Gojobori T."/>
            <person name="Green R.E."/>
            <person name="Gustincich S."/>
            <person name="Harbers M."/>
            <person name="Hayashi Y."/>
            <person name="Hensch T.K."/>
            <person name="Hirokawa N."/>
            <person name="Hill D."/>
            <person name="Huminiecki L."/>
            <person name="Iacono M."/>
            <person name="Ikeo K."/>
            <person name="Iwama A."/>
            <person name="Ishikawa T."/>
            <person name="Jakt M."/>
            <person name="Kanapin A."/>
            <person name="Katoh M."/>
            <person name="Kawasawa Y."/>
            <person name="Kelso J."/>
            <person name="Kitamura H."/>
            <person name="Kitano H."/>
            <person name="Kollias G."/>
            <person name="Krishnan S.P."/>
            <person name="Kruger A."/>
            <person name="Kummerfeld S.K."/>
            <person name="Kurochkin I.V."/>
            <person name="Lareau L.F."/>
            <person name="Lazarevic D."/>
            <person name="Lipovich L."/>
            <person name="Liu J."/>
            <person name="Liuni S."/>
            <person name="McWilliam S."/>
            <person name="Madan Babu M."/>
            <person name="Madera M."/>
            <person name="Marchionni L."/>
            <person name="Matsuda H."/>
            <person name="Matsuzawa S."/>
            <person name="Miki H."/>
            <person name="Mignone F."/>
            <person name="Miyake S."/>
            <person name="Morris K."/>
            <person name="Mottagui-Tabar S."/>
            <person name="Mulder N."/>
            <person name="Nakano N."/>
            <person name="Nakauchi H."/>
            <person name="Ng P."/>
            <person name="Nilsson R."/>
            <person name="Nishiguchi S."/>
            <person name="Nishikawa S."/>
            <person name="Nori F."/>
            <person name="Ohara O."/>
            <person name="Okazaki Y."/>
            <person name="Orlando V."/>
            <person name="Pang K.C."/>
            <person name="Pavan W.J."/>
            <person name="Pavesi G."/>
            <person name="Pesole G."/>
            <person name="Petrovsky N."/>
            <person name="Piazza S."/>
            <person name="Reed J."/>
            <person name="Reid J.F."/>
            <person name="Ring B.Z."/>
            <person name="Ringwald M."/>
            <person name="Rost B."/>
            <person name="Ruan Y."/>
            <person name="Salzberg S.L."/>
            <person name="Sandelin A."/>
            <person name="Schneider C."/>
            <person name="Schoenbach C."/>
            <person name="Sekiguchi K."/>
            <person name="Semple C.A."/>
            <person name="Seno S."/>
            <person name="Sessa L."/>
            <person name="Sheng Y."/>
            <person name="Shibata Y."/>
            <person name="Shimada H."/>
            <person name="Shimada K."/>
            <person name="Silva D."/>
            <person name="Sinclair B."/>
            <person name="Sperling S."/>
            <person name="Stupka E."/>
            <person name="Sugiura K."/>
            <person name="Sultana R."/>
            <person name="Takenaka Y."/>
            <person name="Taki K."/>
            <person name="Tammoja K."/>
            <person name="Tan S.L."/>
            <person name="Tang S."/>
            <person name="Taylor M.S."/>
            <person name="Tegner J."/>
            <person name="Teichmann S.A."/>
            <person name="Ueda H.R."/>
            <person name="van Nimwegen E."/>
            <person name="Verardo R."/>
            <person name="Wei C.L."/>
            <person name="Yagi K."/>
            <person name="Yamanishi H."/>
            <person name="Zabarovsky E."/>
            <person name="Zhu S."/>
            <person name="Zimmer A."/>
            <person name="Hide W."/>
            <person name="Bult C."/>
            <person name="Grimmond S.M."/>
            <person name="Teasdale R.D."/>
            <person name="Liu E.T."/>
            <person name="Brusic V."/>
            <person name="Quackenbush J."/>
            <person name="Wahlestedt C."/>
            <person name="Mattick J.S."/>
            <person name="Hume D.A."/>
            <person name="Kai C."/>
            <person name="Sasaki D."/>
            <person name="Tomaru Y."/>
            <person name="Fukuda S."/>
            <person name="Kanamori-Katayama M."/>
            <person name="Suzuki M."/>
            <person name="Aoki J."/>
            <person name="Arakawa T."/>
            <person name="Iida J."/>
            <person name="Imamura K."/>
            <person name="Itoh M."/>
            <person name="Kato T."/>
            <person name="Kawaji H."/>
            <person name="Kawagashira N."/>
            <person name="Kawashima T."/>
            <person name="Kojima M."/>
            <person name="Kondo S."/>
            <person name="Konno H."/>
            <person name="Nakano K."/>
            <person name="Ninomiya N."/>
            <person name="Nishio T."/>
            <person name="Okada M."/>
            <person name="Plessy C."/>
            <person name="Shibata K."/>
            <person name="Shiraki T."/>
            <person name="Suzuki S."/>
            <person name="Tagami M."/>
            <person name="Waki K."/>
            <person name="Watahiki A."/>
            <person name="Okamura-Oho Y."/>
            <person name="Suzuki H."/>
            <person name="Kawai J."/>
            <person name="Hayashizaki Y."/>
        </authorList>
    </citation>
    <scope>NUCLEOTIDE SEQUENCE [LARGE SCALE MRNA] (ISOFORMS 1 AND 2)</scope>
    <source>
        <strain>C57BL/6J</strain>
        <strain>DBA/2J</strain>
        <strain>NOD</strain>
        <tissue>Thymus</tissue>
    </source>
</reference>
<reference key="2">
    <citation type="journal article" date="2004" name="Genome Res.">
        <title>The status, quality, and expansion of the NIH full-length cDNA project: the Mammalian Gene Collection (MGC).</title>
        <authorList>
            <consortium name="The MGC Project Team"/>
        </authorList>
    </citation>
    <scope>NUCLEOTIDE SEQUENCE [LARGE SCALE MRNA] (ISOFORM 2)</scope>
    <scope>NUCLEOTIDE SEQUENCE [LARGE SCALE MRNA] OF 7-288 (ISOFORM 1)</scope>
    <source>
        <tissue>Brain</tissue>
        <tissue>Embryo</tissue>
    </source>
</reference>
<reference key="3">
    <citation type="journal article" date="2010" name="Cell">
        <title>A tissue-specific atlas of mouse protein phosphorylation and expression.</title>
        <authorList>
            <person name="Huttlin E.L."/>
            <person name="Jedrychowski M.P."/>
            <person name="Elias J.E."/>
            <person name="Goswami T."/>
            <person name="Rad R."/>
            <person name="Beausoleil S.A."/>
            <person name="Villen J."/>
            <person name="Haas W."/>
            <person name="Sowa M.E."/>
            <person name="Gygi S.P."/>
        </authorList>
    </citation>
    <scope>IDENTIFICATION BY MASS SPECTROMETRY [LARGE SCALE ANALYSIS]</scope>
    <source>
        <tissue>Brain</tissue>
        <tissue>Heart</tissue>
        <tissue>Kidney</tissue>
        <tissue>Liver</tissue>
        <tissue>Testis</tissue>
    </source>
</reference>
<reference key="4">
    <citation type="journal article" date="2012" name="Cell">
        <title>The mitochondrial phosphatase PGAM5 functions at the convergence point of multiple necrotic death pathways.</title>
        <authorList>
            <person name="Wang Z."/>
            <person name="Jiang H."/>
            <person name="Chen S."/>
            <person name="Du F."/>
            <person name="Wang X."/>
        </authorList>
    </citation>
    <scope>FUNCTION</scope>
</reference>
<reference key="5">
    <citation type="journal article" date="2020" name="Nat. Commun.">
        <title>Mitochondrial phosphatase PGAM5 modulates cellular senescence by regulating mitochondrial dynamics.</title>
        <authorList>
            <person name="Yu B."/>
            <person name="Ma J."/>
            <person name="Li J."/>
            <person name="Wang D."/>
            <person name="Wang Z."/>
            <person name="Wang S."/>
        </authorList>
    </citation>
    <scope>FUNCTION</scope>
    <scope>DISRUPTION PHENOTYPE</scope>
</reference>
<accession>Q8BX10</accession>
<accession>B2RSM6</accession>
<accession>Q3UK19</accession>
<accession>Q80VY8</accession>
<accession>Q8BM78</accession>
<accession>Q9CZU2</accession>
<protein>
    <recommendedName>
        <fullName>Serine/threonine-protein phosphatase PGAM5, mitochondrial</fullName>
        <ecNumber>3.1.3.16</ecNumber>
    </recommendedName>
    <alternativeName>
        <fullName>Phosphoglycerate mutase family member 5</fullName>
    </alternativeName>
</protein>
<keyword id="KW-0007">Acetylation</keyword>
<keyword id="KW-0025">Alternative splicing</keyword>
<keyword id="KW-0378">Hydrolase</keyword>
<keyword id="KW-0472">Membrane</keyword>
<keyword id="KW-0496">Mitochondrion</keyword>
<keyword id="KW-0999">Mitochondrion inner membrane</keyword>
<keyword id="KW-1000">Mitochondrion outer membrane</keyword>
<keyword id="KW-1210">Necrosis</keyword>
<keyword id="KW-0597">Phosphoprotein</keyword>
<keyword id="KW-1185">Reference proteome</keyword>
<keyword id="KW-0812">Transmembrane</keyword>
<keyword id="KW-1133">Transmembrane helix</keyword>
<comment type="function">
    <text evidence="2 4">Mitochondrial serine/threonine phosphatase that dephosphorylates various substrates and thus plays a role in different biological processes including cellular senescence or mitophagy. Modulates cellular senescence by regulating mitochondrial dynamics. Mechanistically, participates in mitochondrial fission through dephosphorylating DNM1L/DRP1. Additionally, dephosphorylates MFN2 in a stress-sensitive manner and consequently protects it from ubiquitination and degradation to promote mitochondrial network formation. Regulates mitophagy independent of PARKIN by interacting with and dephosphorylating FUNDC1, which interacts with LC3. Regulates anti-oxidative response by forming a tertiary complex with KEAP1 and NRF2 (By similarity). Regulates necroptosis by acting as a RIPK3 target and recruiting the RIPK1-RIPK3-MLKL necrosis 'attack' complex to mitochondria (PubMed:22265414).</text>
</comment>
<comment type="catalytic activity">
    <reaction evidence="2">
        <text>O-phospho-L-seryl-[protein] + H2O = L-seryl-[protein] + phosphate</text>
        <dbReference type="Rhea" id="RHEA:20629"/>
        <dbReference type="Rhea" id="RHEA-COMP:9863"/>
        <dbReference type="Rhea" id="RHEA-COMP:11604"/>
        <dbReference type="ChEBI" id="CHEBI:15377"/>
        <dbReference type="ChEBI" id="CHEBI:29999"/>
        <dbReference type="ChEBI" id="CHEBI:43474"/>
        <dbReference type="ChEBI" id="CHEBI:83421"/>
        <dbReference type="EC" id="3.1.3.16"/>
    </reaction>
</comment>
<comment type="catalytic activity">
    <reaction evidence="2">
        <text>O-phospho-L-threonyl-[protein] + H2O = L-threonyl-[protein] + phosphate</text>
        <dbReference type="Rhea" id="RHEA:47004"/>
        <dbReference type="Rhea" id="RHEA-COMP:11060"/>
        <dbReference type="Rhea" id="RHEA-COMP:11605"/>
        <dbReference type="ChEBI" id="CHEBI:15377"/>
        <dbReference type="ChEBI" id="CHEBI:30013"/>
        <dbReference type="ChEBI" id="CHEBI:43474"/>
        <dbReference type="ChEBI" id="CHEBI:61977"/>
        <dbReference type="EC" id="3.1.3.16"/>
    </reaction>
</comment>
<comment type="subunit">
    <text evidence="2">Dimer. Forms a ternary complex with NFE2L2 and KEAP1. Interacts with BCL2L1 and MAP3K5. Upon TNF-induced necrosis, forms in complex with RIPK1, RIPK3 and MLKL; the formation of this complex leads to PGAM5 phosphorylation. Isoform 2, but not isoform 1, interacts with DNM1L; this interaction leads to DNM1L dephosphorylation and activation and eventually to mitochondria fragmentation.</text>
</comment>
<comment type="subcellular location">
    <subcellularLocation>
        <location evidence="2">Mitochondrion outer membrane</location>
        <topology evidence="3">Single-pass membrane protein</topology>
    </subcellularLocation>
    <subcellularLocation>
        <location evidence="2">Mitochondrion inner membrane</location>
        <topology evidence="3">Single-pass membrane protein</topology>
    </subcellularLocation>
</comment>
<comment type="alternative products">
    <event type="alternative splicing"/>
    <isoform>
        <id>Q8BX10-1</id>
        <name>1</name>
        <sequence type="displayed"/>
    </isoform>
    <isoform>
        <id>Q8BX10-2</id>
        <name>2</name>
        <sequence type="described" ref="VSP_025762"/>
    </isoform>
</comment>
<comment type="domain">
    <text evidence="1">The N-terminal 35 amino acids, including the potential transmembrane alpha-helix, function as a non-cleaved mitochondrial targeting sequence that targets the protein to the cytosolic side of the outer mitochondrial membrane.</text>
</comment>
<comment type="PTM">
    <text evidence="1">Phosphorylated by the RIPK1/RIPK3 complex under necrotic conditions. This phosphorylation increases PGAM5 phosphatase activity (By similarity).</text>
</comment>
<comment type="PTM">
    <text evidence="2">Proteolytically cleaved by PARL in response to loss of mitochondrial membrane potential.</text>
</comment>
<comment type="disruption phenotype">
    <text evidence="5">Deletion mutant mice were born at mendel ratio, but weighed significantly less compared to the wild-type (WT) controls at 1-year and older. About 50% of the mutant mice (aged 1-1.5 years) showed lordokyphosis (hunchback), odd gait and swollen foot, and among them about 50% died from unknown causes. These suggest an accelerated senescence (or aging) phenotype in deletion mutant mice.</text>
</comment>
<comment type="similarity">
    <text evidence="8">Belongs to the phosphoglycerate mutase family. BPG-dependent PGAM subfamily.</text>
</comment>
<comment type="sequence caution" evidence="8">
    <conflict type="frameshift">
        <sequence resource="EMBL-CDS" id="BAB28067"/>
    </conflict>
</comment>
<gene>
    <name type="primary">Pgam5</name>
</gene>
<sequence>MAFRQALQLAACGLAGGSAAVLFSAVAVGKPRGGGDADTRATEPPAWTGARAGRGVWDTNWDRREPLSLINLKKRNVESGEDELTSRLDHYKAKATRHIFLIRHSQYHVDGSLEKDRTLTPLGREQAELTGLRLASLGLKFNKIVHSSMTRAVETTDIISKHLPGVSRVSTDLLREGAPIEPDPPVSHWKPEAVQYYEDGARIEAAFRNYIHRADARQEEDSYEIFICHANVIRYIVCRALQFPPEGWLRLSLNNGSITHLVIRPNGRVALRTLGDTGFMPPDKITRS</sequence>
<proteinExistence type="evidence at protein level"/>
<evidence type="ECO:0000250" key="1"/>
<evidence type="ECO:0000250" key="2">
    <source>
        <dbReference type="UniProtKB" id="Q96HS1"/>
    </source>
</evidence>
<evidence type="ECO:0000255" key="3"/>
<evidence type="ECO:0000269" key="4">
    <source>
    </source>
</evidence>
<evidence type="ECO:0000269" key="5">
    <source>
    </source>
</evidence>
<evidence type="ECO:0000303" key="6">
    <source>
    </source>
</evidence>
<evidence type="ECO:0000303" key="7">
    <source>
    </source>
</evidence>
<evidence type="ECO:0000305" key="8"/>